<organism>
    <name type="scientific">Marinobacter nauticus (strain ATCC 700491 / DSM 11845 / VT8)</name>
    <name type="common">Marinobacter aquaeolei</name>
    <dbReference type="NCBI Taxonomy" id="351348"/>
    <lineage>
        <taxon>Bacteria</taxon>
        <taxon>Pseudomonadati</taxon>
        <taxon>Pseudomonadota</taxon>
        <taxon>Gammaproteobacteria</taxon>
        <taxon>Pseudomonadales</taxon>
        <taxon>Marinobacteraceae</taxon>
        <taxon>Marinobacter</taxon>
    </lineage>
</organism>
<sequence>MELTPRDKDKLLLFTAALLAERRKAKGLKLNYPEAVALISAEIMEGAREGRTVAELMSAGTEILAREDVMDGVADMVHEVQVEATFPDGTKLVTVHNPIV</sequence>
<evidence type="ECO:0000255" key="1">
    <source>
        <dbReference type="HAMAP-Rule" id="MF_00739"/>
    </source>
</evidence>
<dbReference type="EC" id="3.5.1.5" evidence="1"/>
<dbReference type="EMBL" id="CP000514">
    <property type="protein sequence ID" value="ABM20069.1"/>
    <property type="molecule type" value="Genomic_DNA"/>
</dbReference>
<dbReference type="RefSeq" id="WP_011786437.1">
    <property type="nucleotide sequence ID" value="NC_008740.1"/>
</dbReference>
<dbReference type="SMR" id="A1U500"/>
<dbReference type="STRING" id="351348.Maqu_2995"/>
<dbReference type="KEGG" id="maq:Maqu_2995"/>
<dbReference type="eggNOG" id="COG0831">
    <property type="taxonomic scope" value="Bacteria"/>
</dbReference>
<dbReference type="HOGENOM" id="CLU_145825_1_0_6"/>
<dbReference type="OrthoDB" id="9797217at2"/>
<dbReference type="UniPathway" id="UPA00258">
    <property type="reaction ID" value="UER00370"/>
</dbReference>
<dbReference type="Proteomes" id="UP000000998">
    <property type="component" value="Chromosome"/>
</dbReference>
<dbReference type="GO" id="GO:0005737">
    <property type="term" value="C:cytoplasm"/>
    <property type="evidence" value="ECO:0007669"/>
    <property type="project" value="UniProtKB-SubCell"/>
</dbReference>
<dbReference type="GO" id="GO:0016151">
    <property type="term" value="F:nickel cation binding"/>
    <property type="evidence" value="ECO:0007669"/>
    <property type="project" value="InterPro"/>
</dbReference>
<dbReference type="GO" id="GO:0009039">
    <property type="term" value="F:urease activity"/>
    <property type="evidence" value="ECO:0007669"/>
    <property type="project" value="UniProtKB-UniRule"/>
</dbReference>
<dbReference type="GO" id="GO:0043419">
    <property type="term" value="P:urea catabolic process"/>
    <property type="evidence" value="ECO:0007669"/>
    <property type="project" value="UniProtKB-UniRule"/>
</dbReference>
<dbReference type="CDD" id="cd00390">
    <property type="entry name" value="Urease_gamma"/>
    <property type="match status" value="1"/>
</dbReference>
<dbReference type="Gene3D" id="3.30.280.10">
    <property type="entry name" value="Urease, gamma-like subunit"/>
    <property type="match status" value="1"/>
</dbReference>
<dbReference type="HAMAP" id="MF_00739">
    <property type="entry name" value="Urease_gamma"/>
    <property type="match status" value="1"/>
</dbReference>
<dbReference type="InterPro" id="IPR012010">
    <property type="entry name" value="Urease_gamma"/>
</dbReference>
<dbReference type="InterPro" id="IPR002026">
    <property type="entry name" value="Urease_gamma/gamma-beta_su"/>
</dbReference>
<dbReference type="InterPro" id="IPR036463">
    <property type="entry name" value="Urease_gamma_sf"/>
</dbReference>
<dbReference type="InterPro" id="IPR050069">
    <property type="entry name" value="Urease_subunit"/>
</dbReference>
<dbReference type="NCBIfam" id="NF009712">
    <property type="entry name" value="PRK13241.1"/>
    <property type="match status" value="1"/>
</dbReference>
<dbReference type="NCBIfam" id="TIGR00193">
    <property type="entry name" value="urease_gam"/>
    <property type="match status" value="1"/>
</dbReference>
<dbReference type="PANTHER" id="PTHR33569">
    <property type="entry name" value="UREASE"/>
    <property type="match status" value="1"/>
</dbReference>
<dbReference type="PANTHER" id="PTHR33569:SF1">
    <property type="entry name" value="UREASE"/>
    <property type="match status" value="1"/>
</dbReference>
<dbReference type="Pfam" id="PF00547">
    <property type="entry name" value="Urease_gamma"/>
    <property type="match status" value="1"/>
</dbReference>
<dbReference type="PIRSF" id="PIRSF001223">
    <property type="entry name" value="Urease_gamma"/>
    <property type="match status" value="1"/>
</dbReference>
<dbReference type="SUPFAM" id="SSF54111">
    <property type="entry name" value="Urease, gamma-subunit"/>
    <property type="match status" value="1"/>
</dbReference>
<feature type="chain" id="PRO_1000046333" description="Urease subunit gamma">
    <location>
        <begin position="1"/>
        <end position="100"/>
    </location>
</feature>
<gene>
    <name evidence="1" type="primary">ureA</name>
    <name type="ordered locus">Maqu_2995</name>
</gene>
<accession>A1U500</accession>
<protein>
    <recommendedName>
        <fullName evidence="1">Urease subunit gamma</fullName>
        <ecNumber evidence="1">3.5.1.5</ecNumber>
    </recommendedName>
    <alternativeName>
        <fullName evidence="1">Urea amidohydrolase subunit gamma</fullName>
    </alternativeName>
</protein>
<proteinExistence type="inferred from homology"/>
<comment type="catalytic activity">
    <reaction evidence="1">
        <text>urea + 2 H2O + H(+) = hydrogencarbonate + 2 NH4(+)</text>
        <dbReference type="Rhea" id="RHEA:20557"/>
        <dbReference type="ChEBI" id="CHEBI:15377"/>
        <dbReference type="ChEBI" id="CHEBI:15378"/>
        <dbReference type="ChEBI" id="CHEBI:16199"/>
        <dbReference type="ChEBI" id="CHEBI:17544"/>
        <dbReference type="ChEBI" id="CHEBI:28938"/>
        <dbReference type="EC" id="3.5.1.5"/>
    </reaction>
</comment>
<comment type="pathway">
    <text evidence="1">Nitrogen metabolism; urea degradation; CO(2) and NH(3) from urea (urease route): step 1/1.</text>
</comment>
<comment type="subunit">
    <text evidence="1">Heterotrimer of UreA (gamma), UreB (beta) and UreC (alpha) subunits. Three heterotrimers associate to form the active enzyme.</text>
</comment>
<comment type="subcellular location">
    <subcellularLocation>
        <location evidence="1">Cytoplasm</location>
    </subcellularLocation>
</comment>
<comment type="similarity">
    <text evidence="1">Belongs to the urease gamma subunit family.</text>
</comment>
<keyword id="KW-0963">Cytoplasm</keyword>
<keyword id="KW-0378">Hydrolase</keyword>
<name>URE3_MARN8</name>
<reference key="1">
    <citation type="journal article" date="2011" name="Appl. Environ. Microbiol.">
        <title>Genomic potential of Marinobacter aquaeolei, a biogeochemical 'opportunitroph'.</title>
        <authorList>
            <person name="Singer E."/>
            <person name="Webb E.A."/>
            <person name="Nelson W.C."/>
            <person name="Heidelberg J.F."/>
            <person name="Ivanova N."/>
            <person name="Pati A."/>
            <person name="Edwards K.J."/>
        </authorList>
    </citation>
    <scope>NUCLEOTIDE SEQUENCE [LARGE SCALE GENOMIC DNA]</scope>
    <source>
        <strain>ATCC 700491 / DSM 11845 / VT8</strain>
    </source>
</reference>